<evidence type="ECO:0000255" key="1"/>
<evidence type="ECO:0000255" key="2">
    <source>
        <dbReference type="PROSITE-ProRule" id="PRU00521"/>
    </source>
</evidence>
<evidence type="ECO:0000305" key="3"/>
<accession>Q960A0</accession>
<sequence length="582" mass="65569">MISLITYFGVVHYNFYRRHVSLRSLYIILISMWTFSLAIAIPLGLYEAASNSQGPIKCDLSYCGKVVEWITFSIACISLAITASLTGFAVISLHWYNYKSKTNGVDVPKVTTRARIRLTWTFFALIVICLIELLPFGLVIGNDKSSLQGCDSFYNANELLVQSIISSVETLVGSLVFLTDPLINIFFDKNISKMVKLQLTLGKWFIALYRFLFQMTNIFENCSTHYSFEKNLQKCVNASNPCQLLQKMNTAHSLMIWMGFYIPSAMCFLAVLVDTYCLLVTISILKSLKKQSRKQYIFVVVRLSAAILIALCIIIIQSTYFIDIPFRDTFAFFAVLFIIYDFSILSLLGSFTGVAMMTYFGVMRPLVYRDKFTLKTIYIIAFAIVLFSVCVAIPFGLFQAADEIDGPIKCDSESCELIVKWLLFCIACLILMGCTGTLLFVTVSLHWHSYKSKKMGNVSSSAFNHGKSRLTWTTTILVILCCVELIPTGLLAAFGKSESISDDCYDFYNANSLIFPAIVSSLETFLGSITFLLDPIINFSFDKRISKVFSSQMKFLRSKVFCASSSSLSRNDKIIKDQSQIE</sequence>
<reference key="1">
    <citation type="journal article" date="1998" name="Science">
        <title>Genome sequence of the nematode C. elegans: a platform for investigating biology.</title>
        <authorList>
            <consortium name="The C. elegans sequencing consortium"/>
        </authorList>
    </citation>
    <scope>NUCLEOTIDE SEQUENCE [LARGE SCALE GENOMIC DNA]</scope>
    <source>
        <strain>Bristol N2</strain>
    </source>
</reference>
<organism>
    <name type="scientific">Caenorhabditis elegans</name>
    <dbReference type="NCBI Taxonomy" id="6239"/>
    <lineage>
        <taxon>Eukaryota</taxon>
        <taxon>Metazoa</taxon>
        <taxon>Ecdysozoa</taxon>
        <taxon>Nematoda</taxon>
        <taxon>Chromadorea</taxon>
        <taxon>Rhabditida</taxon>
        <taxon>Rhabditina</taxon>
        <taxon>Rhabditomorpha</taxon>
        <taxon>Rhabditoidea</taxon>
        <taxon>Rhabditidae</taxon>
        <taxon>Peloderinae</taxon>
        <taxon>Caenorhabditis</taxon>
    </lineage>
</organism>
<protein>
    <recommendedName>
        <fullName>Putative G-protein coupled receptor B0244.10</fullName>
    </recommendedName>
</protein>
<comment type="subcellular location">
    <subcellularLocation>
        <location evidence="3">Cell membrane</location>
        <topology evidence="3">Multi-pass membrane protein</topology>
    </subcellularLocation>
</comment>
<comment type="similarity">
    <text evidence="2">Belongs to the G-protein coupled receptor 1 family. B0244 subfamily.</text>
</comment>
<feature type="chain" id="PRO_0000070232" description="Putative G-protein coupled receptor B0244.10">
    <location>
        <begin position="1"/>
        <end position="582"/>
    </location>
</feature>
<feature type="transmembrane region" description="Helical" evidence="1">
    <location>
        <begin position="25"/>
        <end position="45"/>
    </location>
</feature>
<feature type="transmembrane region" description="Helical" evidence="1">
    <location>
        <begin position="70"/>
        <end position="90"/>
    </location>
</feature>
<feature type="transmembrane region" description="Helical" evidence="1">
    <location>
        <begin position="120"/>
        <end position="140"/>
    </location>
</feature>
<feature type="transmembrane region" description="Helical" evidence="1">
    <location>
        <begin position="159"/>
        <end position="179"/>
    </location>
</feature>
<feature type="transmembrane region" description="Helical" evidence="1">
    <location>
        <begin position="199"/>
        <end position="218"/>
    </location>
</feature>
<feature type="transmembrane region" description="Helical" evidence="1">
    <location>
        <begin position="253"/>
        <end position="273"/>
    </location>
</feature>
<feature type="transmembrane region" description="Helical" evidence="1">
    <location>
        <begin position="296"/>
        <end position="316"/>
    </location>
</feature>
<feature type="transmembrane region" description="Helical" evidence="1">
    <location>
        <begin position="329"/>
        <end position="349"/>
    </location>
</feature>
<feature type="transmembrane region" description="Helical" evidence="1">
    <location>
        <begin position="377"/>
        <end position="397"/>
    </location>
</feature>
<feature type="transmembrane region" description="Helical" evidence="1">
    <location>
        <begin position="421"/>
        <end position="441"/>
    </location>
</feature>
<feature type="transmembrane region" description="Helical" evidence="1">
    <location>
        <begin position="475"/>
        <end position="495"/>
    </location>
</feature>
<feature type="transmembrane region" description="Helical" evidence="1">
    <location>
        <begin position="513"/>
        <end position="533"/>
    </location>
</feature>
<feature type="glycosylation site" description="N-linked (GlcNAc...) asparagine" evidence="1">
    <location>
        <position position="190"/>
    </location>
</feature>
<feature type="glycosylation site" description="N-linked (GlcNAc...) asparagine" evidence="1">
    <location>
        <position position="221"/>
    </location>
</feature>
<feature type="glycosylation site" description="N-linked (GlcNAc...) asparagine" evidence="1">
    <location>
        <position position="237"/>
    </location>
</feature>
<feature type="glycosylation site" description="N-linked (GlcNAc...) asparagine" evidence="1">
    <location>
        <position position="457"/>
    </location>
</feature>
<feature type="glycosylation site" description="N-linked (GlcNAc...) asparagine" evidence="1">
    <location>
        <position position="538"/>
    </location>
</feature>
<name>YS9A_CAEEL</name>
<proteinExistence type="inferred from homology"/>
<dbReference type="EMBL" id="FO080136">
    <property type="protein sequence ID" value="CCD61507.1"/>
    <property type="molecule type" value="Genomic_DNA"/>
</dbReference>
<dbReference type="RefSeq" id="NP_498240.2">
    <property type="nucleotide sequence ID" value="NM_065839.3"/>
</dbReference>
<dbReference type="SMR" id="Q960A0"/>
<dbReference type="BioGRID" id="41031">
    <property type="interactions" value="1"/>
</dbReference>
<dbReference type="PaxDb" id="6239-B0244.10"/>
<dbReference type="EnsemblMetazoa" id="B0244.10a.1">
    <property type="protein sequence ID" value="B0244.10a.1"/>
    <property type="gene ID" value="WBGene00015085"/>
</dbReference>
<dbReference type="UCSC" id="B0244.10">
    <property type="organism name" value="c. elegans"/>
</dbReference>
<dbReference type="AGR" id="WB:WBGene00015085"/>
<dbReference type="WormBase" id="B0244.10a">
    <property type="protein sequence ID" value="CE51994"/>
    <property type="gene ID" value="WBGene00015085"/>
</dbReference>
<dbReference type="eggNOG" id="ENOG502T3AN">
    <property type="taxonomic scope" value="Eukaryota"/>
</dbReference>
<dbReference type="GeneTree" id="ENSGT00970000195911"/>
<dbReference type="HOGENOM" id="CLU_468710_0_0_1"/>
<dbReference type="InParanoid" id="Q960A0"/>
<dbReference type="OMA" id="ENCSTHY"/>
<dbReference type="PhylomeDB" id="Q960A0"/>
<dbReference type="PRO" id="PR:Q960A0"/>
<dbReference type="Proteomes" id="UP000001940">
    <property type="component" value="Chromosome III"/>
</dbReference>
<dbReference type="Bgee" id="WBGene00015085">
    <property type="expression patterns" value="Expressed in adult organism and 3 other cell types or tissues"/>
</dbReference>
<dbReference type="ExpressionAtlas" id="Q960A0">
    <property type="expression patterns" value="baseline and differential"/>
</dbReference>
<dbReference type="GO" id="GO:0005886">
    <property type="term" value="C:plasma membrane"/>
    <property type="evidence" value="ECO:0007669"/>
    <property type="project" value="UniProtKB-SubCell"/>
</dbReference>
<dbReference type="GO" id="GO:0004930">
    <property type="term" value="F:G protein-coupled receptor activity"/>
    <property type="evidence" value="ECO:0007669"/>
    <property type="project" value="UniProtKB-KW"/>
</dbReference>
<dbReference type="CDD" id="cd00637">
    <property type="entry name" value="7tm_classA_rhodopsin-like"/>
    <property type="match status" value="2"/>
</dbReference>
<dbReference type="Gene3D" id="1.20.1070.10">
    <property type="entry name" value="Rhodopsin 7-helix transmembrane proteins"/>
    <property type="match status" value="2"/>
</dbReference>
<dbReference type="InterPro" id="IPR017452">
    <property type="entry name" value="GPCR_Rhodpsn_7TM"/>
</dbReference>
<dbReference type="InterPro" id="IPR040435">
    <property type="entry name" value="Put_GPCR_Chromadorea"/>
</dbReference>
<dbReference type="PANTHER" id="PTHR37441:SF2">
    <property type="entry name" value="G-PROTEIN COUPLED RECEPTOR B0244.10-RELATED"/>
    <property type="match status" value="1"/>
</dbReference>
<dbReference type="PANTHER" id="PTHR37441">
    <property type="entry name" value="PROTEIN CBG16518"/>
    <property type="match status" value="1"/>
</dbReference>
<dbReference type="SUPFAM" id="SSF81321">
    <property type="entry name" value="Family A G protein-coupled receptor-like"/>
    <property type="match status" value="2"/>
</dbReference>
<dbReference type="PROSITE" id="PS50262">
    <property type="entry name" value="G_PROTEIN_RECEP_F1_2"/>
    <property type="match status" value="2"/>
</dbReference>
<gene>
    <name type="ORF">B0244.10</name>
</gene>
<keyword id="KW-1003">Cell membrane</keyword>
<keyword id="KW-0297">G-protein coupled receptor</keyword>
<keyword id="KW-0325">Glycoprotein</keyword>
<keyword id="KW-0472">Membrane</keyword>
<keyword id="KW-0675">Receptor</keyword>
<keyword id="KW-1185">Reference proteome</keyword>
<keyword id="KW-0807">Transducer</keyword>
<keyword id="KW-0812">Transmembrane</keyword>
<keyword id="KW-1133">Transmembrane helix</keyword>